<reference key="1">
    <citation type="journal article" date="2003" name="Genome Res.">
        <title>Comparative genome analysis of Vibrio vulnificus, a marine pathogen.</title>
        <authorList>
            <person name="Chen C.-Y."/>
            <person name="Wu K.-M."/>
            <person name="Chang Y.-C."/>
            <person name="Chang C.-H."/>
            <person name="Tsai H.-C."/>
            <person name="Liao T.-L."/>
            <person name="Liu Y.-M."/>
            <person name="Chen H.-J."/>
            <person name="Shen A.B.-T."/>
            <person name="Li J.-C."/>
            <person name="Su T.-L."/>
            <person name="Shao C.-P."/>
            <person name="Lee C.-T."/>
            <person name="Hor L.-I."/>
            <person name="Tsai S.-F."/>
        </authorList>
    </citation>
    <scope>NUCLEOTIDE SEQUENCE [LARGE SCALE GENOMIC DNA]</scope>
    <source>
        <strain>YJ016</strain>
    </source>
</reference>
<proteinExistence type="inferred from homology"/>
<name>MURD_VIBVY</name>
<evidence type="ECO:0000255" key="1">
    <source>
        <dbReference type="HAMAP-Rule" id="MF_00639"/>
    </source>
</evidence>
<comment type="function">
    <text evidence="1">Cell wall formation. Catalyzes the addition of glutamate to the nucleotide precursor UDP-N-acetylmuramoyl-L-alanine (UMA).</text>
</comment>
<comment type="catalytic activity">
    <reaction evidence="1">
        <text>UDP-N-acetyl-alpha-D-muramoyl-L-alanine + D-glutamate + ATP = UDP-N-acetyl-alpha-D-muramoyl-L-alanyl-D-glutamate + ADP + phosphate + H(+)</text>
        <dbReference type="Rhea" id="RHEA:16429"/>
        <dbReference type="ChEBI" id="CHEBI:15378"/>
        <dbReference type="ChEBI" id="CHEBI:29986"/>
        <dbReference type="ChEBI" id="CHEBI:30616"/>
        <dbReference type="ChEBI" id="CHEBI:43474"/>
        <dbReference type="ChEBI" id="CHEBI:83898"/>
        <dbReference type="ChEBI" id="CHEBI:83900"/>
        <dbReference type="ChEBI" id="CHEBI:456216"/>
        <dbReference type="EC" id="6.3.2.9"/>
    </reaction>
</comment>
<comment type="pathway">
    <text evidence="1">Cell wall biogenesis; peptidoglycan biosynthesis.</text>
</comment>
<comment type="subcellular location">
    <subcellularLocation>
        <location evidence="1">Cytoplasm</location>
    </subcellularLocation>
</comment>
<comment type="similarity">
    <text evidence="1">Belongs to the MurCDEF family.</text>
</comment>
<gene>
    <name evidence="1" type="primary">murD</name>
    <name type="ordered locus">VV0612</name>
</gene>
<accession>Q7MNV3</accession>
<sequence length="442" mass="47978">MDRWQDIKQVVVVGLGITGLSVVRHLRKTQPQLQVKVIDTRPTPPGVEQLPPDIALHVGSWNEAWLAEADLVVTNPGIALATPQIQTVLARGVAVVGDIELFAWAADKPVIAITGSNGKSTVTDLTGVMANACGVKCAIGGNIGVPALDLLEQEVELYVLELSSFQLETTTSLHLVAAAFLNLSEDHMDRYQGMDDYRQAKLRIFQHAKHGVVNRDDRQTYPETSHGQQSLALVTFGSDDKEFGVMSHQGESWLSYNQQPILASRELKLVGQHNVANVLVVLALLTCAGIDYRKGLSALKSYTGLTHRCQVVADNRGIKWVNDSKATNLASTQAALSGLNCAGKLYLLVGGDGKGADFSPLKPILAQLNLQLCCFGADGDQFMPLHASATRFERMEDVIEHISPQLQSGDMVMLSPACASFDQFSNFMARGDRFAELARQYA</sequence>
<organism>
    <name type="scientific">Vibrio vulnificus (strain YJ016)</name>
    <dbReference type="NCBI Taxonomy" id="196600"/>
    <lineage>
        <taxon>Bacteria</taxon>
        <taxon>Pseudomonadati</taxon>
        <taxon>Pseudomonadota</taxon>
        <taxon>Gammaproteobacteria</taxon>
        <taxon>Vibrionales</taxon>
        <taxon>Vibrionaceae</taxon>
        <taxon>Vibrio</taxon>
    </lineage>
</organism>
<protein>
    <recommendedName>
        <fullName evidence="1">UDP-N-acetylmuramoylalanine--D-glutamate ligase</fullName>
        <ecNumber evidence="1">6.3.2.9</ecNumber>
    </recommendedName>
    <alternativeName>
        <fullName evidence="1">D-glutamic acid-adding enzyme</fullName>
    </alternativeName>
    <alternativeName>
        <fullName evidence="1">UDP-N-acetylmuramoyl-L-alanyl-D-glutamate synthetase</fullName>
    </alternativeName>
</protein>
<feature type="chain" id="PRO_0000109123" description="UDP-N-acetylmuramoylalanine--D-glutamate ligase">
    <location>
        <begin position="1"/>
        <end position="442"/>
    </location>
</feature>
<feature type="binding site" evidence="1">
    <location>
        <begin position="115"/>
        <end position="121"/>
    </location>
    <ligand>
        <name>ATP</name>
        <dbReference type="ChEBI" id="CHEBI:30616"/>
    </ligand>
</feature>
<dbReference type="EC" id="6.3.2.9" evidence="1"/>
<dbReference type="EMBL" id="BA000037">
    <property type="protein sequence ID" value="BAC93376.1"/>
    <property type="molecule type" value="Genomic_DNA"/>
</dbReference>
<dbReference type="RefSeq" id="WP_011149502.1">
    <property type="nucleotide sequence ID" value="NC_005139.1"/>
</dbReference>
<dbReference type="SMR" id="Q7MNV3"/>
<dbReference type="STRING" id="672.VV93_v1c05550"/>
<dbReference type="KEGG" id="vvy:VV0612"/>
<dbReference type="PATRIC" id="fig|196600.6.peg.631"/>
<dbReference type="eggNOG" id="COG0771">
    <property type="taxonomic scope" value="Bacteria"/>
</dbReference>
<dbReference type="HOGENOM" id="CLU_032540_1_0_6"/>
<dbReference type="UniPathway" id="UPA00219"/>
<dbReference type="Proteomes" id="UP000002675">
    <property type="component" value="Chromosome I"/>
</dbReference>
<dbReference type="GO" id="GO:0005737">
    <property type="term" value="C:cytoplasm"/>
    <property type="evidence" value="ECO:0007669"/>
    <property type="project" value="UniProtKB-SubCell"/>
</dbReference>
<dbReference type="GO" id="GO:0005524">
    <property type="term" value="F:ATP binding"/>
    <property type="evidence" value="ECO:0007669"/>
    <property type="project" value="UniProtKB-UniRule"/>
</dbReference>
<dbReference type="GO" id="GO:0008764">
    <property type="term" value="F:UDP-N-acetylmuramoylalanine-D-glutamate ligase activity"/>
    <property type="evidence" value="ECO:0007669"/>
    <property type="project" value="UniProtKB-UniRule"/>
</dbReference>
<dbReference type="GO" id="GO:0051301">
    <property type="term" value="P:cell division"/>
    <property type="evidence" value="ECO:0007669"/>
    <property type="project" value="UniProtKB-KW"/>
</dbReference>
<dbReference type="GO" id="GO:0071555">
    <property type="term" value="P:cell wall organization"/>
    <property type="evidence" value="ECO:0007669"/>
    <property type="project" value="UniProtKB-KW"/>
</dbReference>
<dbReference type="GO" id="GO:0009252">
    <property type="term" value="P:peptidoglycan biosynthetic process"/>
    <property type="evidence" value="ECO:0007669"/>
    <property type="project" value="UniProtKB-UniRule"/>
</dbReference>
<dbReference type="GO" id="GO:0008360">
    <property type="term" value="P:regulation of cell shape"/>
    <property type="evidence" value="ECO:0007669"/>
    <property type="project" value="UniProtKB-KW"/>
</dbReference>
<dbReference type="Gene3D" id="3.90.190.20">
    <property type="entry name" value="Mur ligase, C-terminal domain"/>
    <property type="match status" value="1"/>
</dbReference>
<dbReference type="Gene3D" id="3.40.1190.10">
    <property type="entry name" value="Mur-like, catalytic domain"/>
    <property type="match status" value="1"/>
</dbReference>
<dbReference type="Gene3D" id="3.40.50.720">
    <property type="entry name" value="NAD(P)-binding Rossmann-like Domain"/>
    <property type="match status" value="1"/>
</dbReference>
<dbReference type="HAMAP" id="MF_00639">
    <property type="entry name" value="MurD"/>
    <property type="match status" value="1"/>
</dbReference>
<dbReference type="InterPro" id="IPR036565">
    <property type="entry name" value="Mur-like_cat_sf"/>
</dbReference>
<dbReference type="InterPro" id="IPR004101">
    <property type="entry name" value="Mur_ligase_C"/>
</dbReference>
<dbReference type="InterPro" id="IPR036615">
    <property type="entry name" value="Mur_ligase_C_dom_sf"/>
</dbReference>
<dbReference type="InterPro" id="IPR013221">
    <property type="entry name" value="Mur_ligase_cen"/>
</dbReference>
<dbReference type="InterPro" id="IPR005762">
    <property type="entry name" value="MurD"/>
</dbReference>
<dbReference type="NCBIfam" id="TIGR01087">
    <property type="entry name" value="murD"/>
    <property type="match status" value="1"/>
</dbReference>
<dbReference type="PANTHER" id="PTHR43692">
    <property type="entry name" value="UDP-N-ACETYLMURAMOYLALANINE--D-GLUTAMATE LIGASE"/>
    <property type="match status" value="1"/>
</dbReference>
<dbReference type="PANTHER" id="PTHR43692:SF1">
    <property type="entry name" value="UDP-N-ACETYLMURAMOYLALANINE--D-GLUTAMATE LIGASE"/>
    <property type="match status" value="1"/>
</dbReference>
<dbReference type="Pfam" id="PF02875">
    <property type="entry name" value="Mur_ligase_C"/>
    <property type="match status" value="1"/>
</dbReference>
<dbReference type="Pfam" id="PF08245">
    <property type="entry name" value="Mur_ligase_M"/>
    <property type="match status" value="1"/>
</dbReference>
<dbReference type="Pfam" id="PF21799">
    <property type="entry name" value="MurD-like_N"/>
    <property type="match status" value="1"/>
</dbReference>
<dbReference type="SUPFAM" id="SSF51984">
    <property type="entry name" value="MurCD N-terminal domain"/>
    <property type="match status" value="1"/>
</dbReference>
<dbReference type="SUPFAM" id="SSF53623">
    <property type="entry name" value="MurD-like peptide ligases, catalytic domain"/>
    <property type="match status" value="1"/>
</dbReference>
<dbReference type="SUPFAM" id="SSF53244">
    <property type="entry name" value="MurD-like peptide ligases, peptide-binding domain"/>
    <property type="match status" value="1"/>
</dbReference>
<keyword id="KW-0067">ATP-binding</keyword>
<keyword id="KW-0131">Cell cycle</keyword>
<keyword id="KW-0132">Cell division</keyword>
<keyword id="KW-0133">Cell shape</keyword>
<keyword id="KW-0961">Cell wall biogenesis/degradation</keyword>
<keyword id="KW-0963">Cytoplasm</keyword>
<keyword id="KW-0436">Ligase</keyword>
<keyword id="KW-0547">Nucleotide-binding</keyword>
<keyword id="KW-0573">Peptidoglycan synthesis</keyword>